<evidence type="ECO:0000255" key="1">
    <source>
        <dbReference type="HAMAP-Rule" id="MF_00332"/>
    </source>
</evidence>
<evidence type="ECO:0000256" key="2">
    <source>
        <dbReference type="SAM" id="MobiDB-lite"/>
    </source>
</evidence>
<name>DNAK_DICTD</name>
<protein>
    <recommendedName>
        <fullName evidence="1">Chaperone protein DnaK</fullName>
    </recommendedName>
    <alternativeName>
        <fullName evidence="1">HSP70</fullName>
    </alternativeName>
    <alternativeName>
        <fullName evidence="1">Heat shock 70 kDa protein</fullName>
    </alternativeName>
    <alternativeName>
        <fullName evidence="1">Heat shock protein 70</fullName>
    </alternativeName>
</protein>
<reference key="1">
    <citation type="journal article" date="2016" name="Front. Microbiol.">
        <title>The complete genome sequence of hyperthermophile Dictyoglomus turgidum DSM 6724 reveals a specialized carbohydrate fermentor.</title>
        <authorList>
            <person name="Brumm P.J."/>
            <person name="Gowda K."/>
            <person name="Robb F.T."/>
            <person name="Mead D.A."/>
        </authorList>
    </citation>
    <scope>NUCLEOTIDE SEQUENCE [LARGE SCALE GENOMIC DNA]</scope>
    <source>
        <strain>DSM 6724 / Z-1310</strain>
    </source>
</reference>
<sequence>MAKIVGIDLGTTNSLIAYLEGGRPVIIPNAEGSRLTPSIVAFTKDGQLLVGEPAKRQAIVNAERTIRSIKRHMGTNYKVKIDDKEYTPQEISAMILRKLKRDAEAYLGEKIEKAVITVPAYFSDAQRQATKDAGAIAGLEVVRIINEPTAAALAYGLDKEGHQKILVFDLGGGTFDVSILEIGEGVFEVIATAGNNRLGGDDFDERIVNWLIENFMEEHGINLREDKTALQRLYEAAEKAKIELSSKLQTEINLPFIAMKGNTPLHLSYTLTRAKFEELTYDLVEKTKEPTERALKDAGLSPSQIDKIILVGGATRMPCIQEWIKKHFGKEPQRNVNPDEAVALGAAIQAGVIGGEIRDIVLVDVTPLSLGIETLGGVFTKIIERNTPIPVSKSQIFTTAADYQTSVEIHVLQGERALAKDNISLGRFILDGIPPAPRGVPQIEVTFDIDVNGIVHVSAKDKATGREQRITISNAIRLSEAEIKRMTEEAKRFEEEDRKRREEIETKNQAEHLIYTARKTLKDYGDKVSKDIVQKVEDKIKNLEELIKPERINVEQVRKGMEELTQTLGEIGQFMYQSAGSTAGNPGQGQSTENPGGKTIDGDYKVN</sequence>
<accession>B8DYH6</accession>
<comment type="function">
    <text evidence="1">Acts as a chaperone.</text>
</comment>
<comment type="induction">
    <text evidence="1">By stress conditions e.g. heat shock.</text>
</comment>
<comment type="similarity">
    <text evidence="1">Belongs to the heat shock protein 70 family.</text>
</comment>
<dbReference type="EMBL" id="CP001251">
    <property type="protein sequence ID" value="ACK41358.1"/>
    <property type="molecule type" value="Genomic_DNA"/>
</dbReference>
<dbReference type="RefSeq" id="WP_012582444.1">
    <property type="nucleotide sequence ID" value="NC_011661.1"/>
</dbReference>
<dbReference type="RefSeq" id="YP_002351972.1">
    <property type="nucleotide sequence ID" value="NC_011661.1"/>
</dbReference>
<dbReference type="SMR" id="B8DYH6"/>
<dbReference type="FunCoup" id="B8DYH6">
    <property type="interactions" value="386"/>
</dbReference>
<dbReference type="STRING" id="515635.Dtur_0017"/>
<dbReference type="EnsemblBacteria" id="ACK41358">
    <property type="protein sequence ID" value="ACK41358"/>
    <property type="gene ID" value="Dtur_0017"/>
</dbReference>
<dbReference type="KEGG" id="dtu:Dtur_0017"/>
<dbReference type="PATRIC" id="fig|515635.4.peg.17"/>
<dbReference type="eggNOG" id="COG0443">
    <property type="taxonomic scope" value="Bacteria"/>
</dbReference>
<dbReference type="HOGENOM" id="CLU_005965_2_4_0"/>
<dbReference type="InParanoid" id="B8DYH6"/>
<dbReference type="OrthoDB" id="9766019at2"/>
<dbReference type="Proteomes" id="UP000007719">
    <property type="component" value="Chromosome"/>
</dbReference>
<dbReference type="GO" id="GO:0005524">
    <property type="term" value="F:ATP binding"/>
    <property type="evidence" value="ECO:0007669"/>
    <property type="project" value="UniProtKB-UniRule"/>
</dbReference>
<dbReference type="GO" id="GO:0016887">
    <property type="term" value="F:ATP hydrolysis activity"/>
    <property type="evidence" value="ECO:0000318"/>
    <property type="project" value="GO_Central"/>
</dbReference>
<dbReference type="GO" id="GO:0140662">
    <property type="term" value="F:ATP-dependent protein folding chaperone"/>
    <property type="evidence" value="ECO:0007669"/>
    <property type="project" value="InterPro"/>
</dbReference>
<dbReference type="GO" id="GO:0031072">
    <property type="term" value="F:heat shock protein binding"/>
    <property type="evidence" value="ECO:0000318"/>
    <property type="project" value="GO_Central"/>
</dbReference>
<dbReference type="GO" id="GO:0044183">
    <property type="term" value="F:protein folding chaperone"/>
    <property type="evidence" value="ECO:0000318"/>
    <property type="project" value="GO_Central"/>
</dbReference>
<dbReference type="GO" id="GO:0051082">
    <property type="term" value="F:unfolded protein binding"/>
    <property type="evidence" value="ECO:0007669"/>
    <property type="project" value="InterPro"/>
</dbReference>
<dbReference type="GO" id="GO:0051085">
    <property type="term" value="P:chaperone cofactor-dependent protein refolding"/>
    <property type="evidence" value="ECO:0000318"/>
    <property type="project" value="GO_Central"/>
</dbReference>
<dbReference type="GO" id="GO:0042026">
    <property type="term" value="P:protein refolding"/>
    <property type="evidence" value="ECO:0000318"/>
    <property type="project" value="GO_Central"/>
</dbReference>
<dbReference type="CDD" id="cd10234">
    <property type="entry name" value="ASKHA_NBD_HSP70_DnaK-like"/>
    <property type="match status" value="1"/>
</dbReference>
<dbReference type="FunFam" id="2.60.34.10:FF:000014">
    <property type="entry name" value="Chaperone protein DnaK HSP70"/>
    <property type="match status" value="1"/>
</dbReference>
<dbReference type="FunFam" id="1.20.1270.10:FF:000001">
    <property type="entry name" value="Molecular chaperone DnaK"/>
    <property type="match status" value="1"/>
</dbReference>
<dbReference type="FunFam" id="3.30.420.40:FF:000071">
    <property type="entry name" value="Molecular chaperone DnaK"/>
    <property type="match status" value="1"/>
</dbReference>
<dbReference type="FunFam" id="3.90.640.10:FF:000003">
    <property type="entry name" value="Molecular chaperone DnaK"/>
    <property type="match status" value="1"/>
</dbReference>
<dbReference type="Gene3D" id="1.20.1270.10">
    <property type="match status" value="1"/>
</dbReference>
<dbReference type="Gene3D" id="3.30.420.40">
    <property type="match status" value="2"/>
</dbReference>
<dbReference type="Gene3D" id="3.90.640.10">
    <property type="entry name" value="Actin, Chain A, domain 4"/>
    <property type="match status" value="1"/>
</dbReference>
<dbReference type="Gene3D" id="2.60.34.10">
    <property type="entry name" value="Substrate Binding Domain Of DNAk, Chain A, domain 1"/>
    <property type="match status" value="1"/>
</dbReference>
<dbReference type="HAMAP" id="MF_00332">
    <property type="entry name" value="DnaK"/>
    <property type="match status" value="1"/>
</dbReference>
<dbReference type="InterPro" id="IPR043129">
    <property type="entry name" value="ATPase_NBD"/>
</dbReference>
<dbReference type="InterPro" id="IPR012725">
    <property type="entry name" value="Chaperone_DnaK"/>
</dbReference>
<dbReference type="InterPro" id="IPR018181">
    <property type="entry name" value="Heat_shock_70_CS"/>
</dbReference>
<dbReference type="InterPro" id="IPR029048">
    <property type="entry name" value="HSP70_C_sf"/>
</dbReference>
<dbReference type="InterPro" id="IPR029047">
    <property type="entry name" value="HSP70_peptide-bd_sf"/>
</dbReference>
<dbReference type="InterPro" id="IPR013126">
    <property type="entry name" value="Hsp_70_fam"/>
</dbReference>
<dbReference type="NCBIfam" id="NF001413">
    <property type="entry name" value="PRK00290.1"/>
    <property type="match status" value="1"/>
</dbReference>
<dbReference type="NCBIfam" id="TIGR02350">
    <property type="entry name" value="prok_dnaK"/>
    <property type="match status" value="1"/>
</dbReference>
<dbReference type="PANTHER" id="PTHR19375">
    <property type="entry name" value="HEAT SHOCK PROTEIN 70KDA"/>
    <property type="match status" value="1"/>
</dbReference>
<dbReference type="Pfam" id="PF00012">
    <property type="entry name" value="HSP70"/>
    <property type="match status" value="1"/>
</dbReference>
<dbReference type="PRINTS" id="PR00301">
    <property type="entry name" value="HEATSHOCK70"/>
</dbReference>
<dbReference type="SUPFAM" id="SSF53067">
    <property type="entry name" value="Actin-like ATPase domain"/>
    <property type="match status" value="2"/>
</dbReference>
<dbReference type="SUPFAM" id="SSF100934">
    <property type="entry name" value="Heat shock protein 70kD (HSP70), C-terminal subdomain"/>
    <property type="match status" value="1"/>
</dbReference>
<dbReference type="SUPFAM" id="SSF100920">
    <property type="entry name" value="Heat shock protein 70kD (HSP70), peptide-binding domain"/>
    <property type="match status" value="1"/>
</dbReference>
<dbReference type="PROSITE" id="PS00297">
    <property type="entry name" value="HSP70_1"/>
    <property type="match status" value="1"/>
</dbReference>
<dbReference type="PROSITE" id="PS00329">
    <property type="entry name" value="HSP70_2"/>
    <property type="match status" value="1"/>
</dbReference>
<dbReference type="PROSITE" id="PS01036">
    <property type="entry name" value="HSP70_3"/>
    <property type="match status" value="1"/>
</dbReference>
<feature type="chain" id="PRO_1000119702" description="Chaperone protein DnaK">
    <location>
        <begin position="1"/>
        <end position="607"/>
    </location>
</feature>
<feature type="region of interest" description="Disordered" evidence="2">
    <location>
        <begin position="577"/>
        <end position="607"/>
    </location>
</feature>
<feature type="compositionally biased region" description="Polar residues" evidence="2">
    <location>
        <begin position="577"/>
        <end position="594"/>
    </location>
</feature>
<feature type="modified residue" description="Phosphothreonine; by autocatalysis" evidence="1">
    <location>
        <position position="174"/>
    </location>
</feature>
<keyword id="KW-0067">ATP-binding</keyword>
<keyword id="KW-0143">Chaperone</keyword>
<keyword id="KW-0547">Nucleotide-binding</keyword>
<keyword id="KW-0597">Phosphoprotein</keyword>
<keyword id="KW-1185">Reference proteome</keyword>
<keyword id="KW-0346">Stress response</keyword>
<organism>
    <name type="scientific">Dictyoglomus turgidum (strain DSM 6724 / Z-1310)</name>
    <dbReference type="NCBI Taxonomy" id="515635"/>
    <lineage>
        <taxon>Bacteria</taxon>
        <taxon>Pseudomonadati</taxon>
        <taxon>Dictyoglomota</taxon>
        <taxon>Dictyoglomia</taxon>
        <taxon>Dictyoglomales</taxon>
        <taxon>Dictyoglomaceae</taxon>
        <taxon>Dictyoglomus</taxon>
    </lineage>
</organism>
<gene>
    <name evidence="1" type="primary">dnaK</name>
    <name type="ordered locus">Dtur_0017</name>
</gene>
<proteinExistence type="inferred from homology"/>